<evidence type="ECO:0000255" key="1">
    <source>
        <dbReference type="PROSITE-ProRule" id="PRU00303"/>
    </source>
</evidence>
<evidence type="ECO:0000305" key="2"/>
<gene>
    <name type="primary">lpl9</name>
    <name type="ordered locus">SA0405</name>
</gene>
<dbReference type="EMBL" id="BA000018">
    <property type="protein sequence ID" value="BAB41634.1"/>
    <property type="status" value="ALT_INIT"/>
    <property type="molecule type" value="Genomic_DNA"/>
</dbReference>
<dbReference type="PIR" id="G89809">
    <property type="entry name" value="G89809"/>
</dbReference>
<dbReference type="SMR" id="Q7A7F8"/>
<dbReference type="EnsemblBacteria" id="BAB41634">
    <property type="protein sequence ID" value="BAB41634"/>
    <property type="gene ID" value="BAB41634"/>
</dbReference>
<dbReference type="KEGG" id="sau:SA0405"/>
<dbReference type="HOGENOM" id="CLU_071589_0_1_9"/>
<dbReference type="GO" id="GO:0005886">
    <property type="term" value="C:plasma membrane"/>
    <property type="evidence" value="ECO:0007669"/>
    <property type="project" value="UniProtKB-SubCell"/>
</dbReference>
<dbReference type="Gene3D" id="2.50.20.40">
    <property type="match status" value="1"/>
</dbReference>
<dbReference type="InterPro" id="IPR007595">
    <property type="entry name" value="Csa"/>
</dbReference>
<dbReference type="InterPro" id="IPR038641">
    <property type="entry name" value="Csa_sf"/>
</dbReference>
<dbReference type="NCBIfam" id="TIGR01742">
    <property type="entry name" value="SA_tandem_lipo"/>
    <property type="match status" value="1"/>
</dbReference>
<dbReference type="Pfam" id="PF04507">
    <property type="entry name" value="DUF576"/>
    <property type="match status" value="1"/>
</dbReference>
<dbReference type="PROSITE" id="PS51257">
    <property type="entry name" value="PROKAR_LIPOPROTEIN"/>
    <property type="match status" value="1"/>
</dbReference>
<organism>
    <name type="scientific">Staphylococcus aureus (strain N315)</name>
    <dbReference type="NCBI Taxonomy" id="158879"/>
    <lineage>
        <taxon>Bacteria</taxon>
        <taxon>Bacillati</taxon>
        <taxon>Bacillota</taxon>
        <taxon>Bacilli</taxon>
        <taxon>Bacillales</taxon>
        <taxon>Staphylococcaceae</taxon>
        <taxon>Staphylococcus</taxon>
    </lineage>
</organism>
<keyword id="KW-1003">Cell membrane</keyword>
<keyword id="KW-0449">Lipoprotein</keyword>
<keyword id="KW-0472">Membrane</keyword>
<keyword id="KW-0564">Palmitate</keyword>
<keyword id="KW-0732">Signal</keyword>
<feature type="signal peptide" evidence="1">
    <location>
        <begin position="1"/>
        <end position="22"/>
    </location>
</feature>
<feature type="chain" id="PRO_0000282150" description="Uncharacterized lipoprotein SA0405">
    <location>
        <begin position="23"/>
        <end position="270"/>
    </location>
</feature>
<feature type="lipid moiety-binding region" description="N-palmitoyl cysteine" evidence="1">
    <location>
        <position position="23"/>
    </location>
</feature>
<feature type="lipid moiety-binding region" description="S-diacylglycerol cysteine" evidence="1">
    <location>
        <position position="23"/>
    </location>
</feature>
<sequence length="270" mass="31643">MEYIKKIALYMSVLLLIIFIGGCGNMKEEQKKEANTNKTDSKEEKIKKSFAKTLDMYPIKNLEELYDKEGYRDGEFEKGDKGMWTIYTDFAKSNKPGELSNEGMVLYLDRNTRTAKGYYFVRTFYRKDKLPDRKNYKVEMKNNKIILLDKVEDPNLKKRIENFKFFGQYANLKELKNYSNGDVSINENVPSYDVKYKMSNKDENVKQLRSRYNIPTDKSPVLKMHIDGNLKGSSVGDRKLEIDFSKRENSHLSVIDSLDYQPAKVDEDER</sequence>
<protein>
    <recommendedName>
        <fullName>Uncharacterized lipoprotein SA0405</fullName>
    </recommendedName>
</protein>
<reference key="1">
    <citation type="journal article" date="2001" name="Lancet">
        <title>Whole genome sequencing of meticillin-resistant Staphylococcus aureus.</title>
        <authorList>
            <person name="Kuroda M."/>
            <person name="Ohta T."/>
            <person name="Uchiyama I."/>
            <person name="Baba T."/>
            <person name="Yuzawa H."/>
            <person name="Kobayashi I."/>
            <person name="Cui L."/>
            <person name="Oguchi A."/>
            <person name="Aoki K."/>
            <person name="Nagai Y."/>
            <person name="Lian J.-Q."/>
            <person name="Ito T."/>
            <person name="Kanamori M."/>
            <person name="Matsumaru H."/>
            <person name="Maruyama A."/>
            <person name="Murakami H."/>
            <person name="Hosoyama A."/>
            <person name="Mizutani-Ui Y."/>
            <person name="Takahashi N.K."/>
            <person name="Sawano T."/>
            <person name="Inoue R."/>
            <person name="Kaito C."/>
            <person name="Sekimizu K."/>
            <person name="Hirakawa H."/>
            <person name="Kuhara S."/>
            <person name="Goto S."/>
            <person name="Yabuzaki J."/>
            <person name="Kanehisa M."/>
            <person name="Yamashita A."/>
            <person name="Oshima K."/>
            <person name="Furuya K."/>
            <person name="Yoshino C."/>
            <person name="Shiba T."/>
            <person name="Hattori M."/>
            <person name="Ogasawara N."/>
            <person name="Hayashi H."/>
            <person name="Hiramatsu K."/>
        </authorList>
    </citation>
    <scope>NUCLEOTIDE SEQUENCE [LARGE SCALE GENOMIC DNA]</scope>
    <source>
        <strain>N315</strain>
    </source>
</reference>
<accession>Q7A7F8</accession>
<name>Y405_STAAN</name>
<proteinExistence type="inferred from homology"/>
<comment type="subcellular location">
    <subcellularLocation>
        <location evidence="1">Cell membrane</location>
        <topology evidence="1">Lipid-anchor</topology>
    </subcellularLocation>
</comment>
<comment type="similarity">
    <text evidence="2">Belongs to the staphylococcal tandem lipoprotein family.</text>
</comment>
<comment type="sequence caution" evidence="2">
    <conflict type="erroneous initiation">
        <sequence resource="EMBL-CDS" id="BAB41634"/>
    </conflict>
</comment>